<comment type="catalytic activity">
    <reaction evidence="3">
        <text>L-histidinol phosphate + 2-oxoglutarate = 3-(imidazol-4-yl)-2-oxopropyl phosphate + L-glutamate</text>
        <dbReference type="Rhea" id="RHEA:23744"/>
        <dbReference type="ChEBI" id="CHEBI:16810"/>
        <dbReference type="ChEBI" id="CHEBI:29985"/>
        <dbReference type="ChEBI" id="CHEBI:57766"/>
        <dbReference type="ChEBI" id="CHEBI:57980"/>
        <dbReference type="EC" id="2.6.1.9"/>
    </reaction>
</comment>
<comment type="cofactor">
    <cofactor evidence="1">
        <name>pyridoxal 5'-phosphate</name>
        <dbReference type="ChEBI" id="CHEBI:597326"/>
    </cofactor>
</comment>
<comment type="pathway">
    <text evidence="3">Amino-acid biosynthesis; L-histidine biosynthesis; L-histidine from 5-phospho-alpha-D-ribose 1-diphosphate: step 7/9.</text>
</comment>
<comment type="subunit">
    <text evidence="1">Homodimer.</text>
</comment>
<comment type="subcellular location">
    <subcellularLocation>
        <location evidence="2">Plastid</location>
        <location evidence="2">Chloroplast</location>
    </subcellularLocation>
</comment>
<comment type="alternative products">
    <event type="alternative splicing"/>
    <isoform>
        <id>P0DI07-1</id>
        <name>1</name>
        <sequence type="displayed"/>
    </isoform>
    <isoform>
        <id>P0DI07-2</id>
        <name>2</name>
        <sequence type="described" ref="VSP_058847"/>
    </isoform>
    <text>A number of isoforms are produced. According to EST sequences.</text>
</comment>
<comment type="similarity">
    <text evidence="2">Belongs to the class-II pyridoxal-phosphate-dependent aminotransferase family. Histidinol-phosphate aminotransferase subfamily.</text>
</comment>
<comment type="sequence caution" evidence="2">
    <conflict type="erroneous gene model prediction">
        <sequence resource="EMBL-CDS" id="AAG52232"/>
    </conflict>
</comment>
<comment type="sequence caution" evidence="2">
    <conflict type="erroneous gene model prediction">
        <sequence resource="EMBL-CDS" id="AAR85384"/>
    </conflict>
</comment>
<comment type="sequence caution" evidence="2">
    <conflict type="erroneous gene model prediction">
        <sequence resource="EMBL-CDS" id="AAR85385"/>
    </conflict>
</comment>
<comment type="sequence caution" evidence="2">
    <conflict type="erroneous gene model prediction">
        <sequence resource="EMBL-CDS" id="AAR85386"/>
    </conflict>
</comment>
<comment type="sequence caution" evidence="2">
    <conflict type="erroneous gene model prediction">
        <sequence resource="EMBL-CDS" id="AAR85387"/>
    </conflict>
</comment>
<comment type="sequence caution" evidence="2">
    <conflict type="erroneous gene model prediction">
        <sequence resource="EMBL-CDS" id="AAR85388"/>
    </conflict>
</comment>
<comment type="sequence caution" evidence="2">
    <conflict type="erroneous gene model prediction">
        <sequence resource="EMBL-CDS" id="AAR85389"/>
    </conflict>
</comment>
<comment type="sequence caution" evidence="2">
    <conflict type="erroneous gene model prediction">
        <sequence resource="EMBL-CDS" id="AAR85390"/>
    </conflict>
</comment>
<comment type="sequence caution" evidence="2">
    <conflict type="erroneous gene model prediction">
        <sequence resource="EMBL-CDS" id="AAR85391"/>
    </conflict>
</comment>
<comment type="sequence caution" evidence="2">
    <conflict type="erroneous gene model prediction">
        <sequence resource="EMBL-CDS" id="AAR85392"/>
    </conflict>
</comment>
<comment type="sequence caution" evidence="2">
    <conflict type="erroneous gene model prediction">
        <sequence resource="EMBL-CDS" id="AAR85393"/>
    </conflict>
</comment>
<comment type="sequence caution" evidence="2">
    <conflict type="erroneous gene model prediction">
        <sequence resource="EMBL-CDS" id="AAR85394"/>
    </conflict>
</comment>
<comment type="sequence caution" evidence="2">
    <conflict type="erroneous gene model prediction">
        <sequence resource="EMBL-CDS" id="AAR85395"/>
    </conflict>
</comment>
<comment type="sequence caution" evidence="2">
    <conflict type="erroneous gene model prediction">
        <sequence resource="EMBL-CDS" id="AAR85396"/>
    </conflict>
</comment>
<comment type="sequence caution" evidence="2">
    <conflict type="erroneous gene model prediction">
        <sequence resource="EMBL-CDS" id="AAR85397"/>
    </conflict>
</comment>
<comment type="sequence caution" evidence="2">
    <conflict type="erroneous gene model prediction">
        <sequence resource="EMBL-CDS" id="AAR85398"/>
    </conflict>
</comment>
<sequence length="417" mass="46635">MGVINVQGSPSFSIHSSESNLRKSRALKKPFCSIRNRVYCAQSSSAAVDESKNITMGDSFIRPHLRQLAAYQPILPFEVLSAQLGRKPEDIVKLDANENPYGPPPEVFEALGNMKFPYVYPDPQSRRLRDALAQDSGLESEYILVGCGADELIDLIMRCVLDPGEKIIDCPPTFSMYVFDAAVNGAGVIKVPRNPDFSLNVDRIAEVVELEKPKCIFLTSPNNPDGSIISEDDLLKILEMPILVVLDEAYIEFSGVESRMKWVKKYENLIVLRTFSKRAGLAGLRVGYGAFPLSIIEYLWRAKQPYNVSVAGEVAALAALSNGKYLEDVRDALVRERERLFGLLKEVPFLNPYPSYSNFILCEVTSGMDAKKLKEDLAKMGVMVRHYNSQELKGYVRVSAGKPEHTDVLMECLKQFY</sequence>
<name>HIS6B_ARATH</name>
<gene>
    <name type="primary">HISN6B</name>
    <name type="synonym">GD1-A</name>
    <name type="synonym">HPA2</name>
    <name type="ordered locus">At1g71920</name>
    <name type="ORF">F17M19.7</name>
</gene>
<dbReference type="EC" id="2.6.1.9" evidence="3"/>
<dbReference type="EMBL" id="AC021665">
    <property type="protein sequence ID" value="AAG52232.1"/>
    <property type="status" value="ALT_SEQ"/>
    <property type="molecule type" value="Genomic_DNA"/>
</dbReference>
<dbReference type="EMBL" id="CP002684">
    <property type="protein sequence ID" value="AEE35252.1"/>
    <property type="molecule type" value="Genomic_DNA"/>
</dbReference>
<dbReference type="EMBL" id="CP002684">
    <property type="protein sequence ID" value="ANM59283.1"/>
    <property type="molecule type" value="Genomic_DNA"/>
</dbReference>
<dbReference type="EMBL" id="CP002684">
    <property type="protein sequence ID" value="ANM59284.1"/>
    <property type="molecule type" value="Genomic_DNA"/>
</dbReference>
<dbReference type="EMBL" id="CP002684">
    <property type="protein sequence ID" value="ANM59285.1"/>
    <property type="molecule type" value="Genomic_DNA"/>
</dbReference>
<dbReference type="EMBL" id="AY470000">
    <property type="protein sequence ID" value="AAR85384.1"/>
    <property type="status" value="ALT_SEQ"/>
    <property type="molecule type" value="Genomic_DNA"/>
</dbReference>
<dbReference type="EMBL" id="AY470001">
    <property type="protein sequence ID" value="AAR85385.1"/>
    <property type="status" value="ALT_SEQ"/>
    <property type="molecule type" value="Genomic_DNA"/>
</dbReference>
<dbReference type="EMBL" id="AY470002">
    <property type="protein sequence ID" value="AAR85386.1"/>
    <property type="status" value="ALT_SEQ"/>
    <property type="molecule type" value="Genomic_DNA"/>
</dbReference>
<dbReference type="EMBL" id="AY470003">
    <property type="protein sequence ID" value="AAR85387.1"/>
    <property type="status" value="ALT_SEQ"/>
    <property type="molecule type" value="Genomic_DNA"/>
</dbReference>
<dbReference type="EMBL" id="AY470004">
    <property type="protein sequence ID" value="AAR85388.1"/>
    <property type="status" value="ALT_SEQ"/>
    <property type="molecule type" value="Genomic_DNA"/>
</dbReference>
<dbReference type="EMBL" id="AY470005">
    <property type="protein sequence ID" value="AAR85389.1"/>
    <property type="status" value="ALT_SEQ"/>
    <property type="molecule type" value="Genomic_DNA"/>
</dbReference>
<dbReference type="EMBL" id="AY470006">
    <property type="protein sequence ID" value="AAR85390.1"/>
    <property type="status" value="ALT_SEQ"/>
    <property type="molecule type" value="Genomic_DNA"/>
</dbReference>
<dbReference type="EMBL" id="AY470007">
    <property type="protein sequence ID" value="AAR85391.1"/>
    <property type="status" value="ALT_SEQ"/>
    <property type="molecule type" value="Genomic_DNA"/>
</dbReference>
<dbReference type="EMBL" id="AY470008">
    <property type="protein sequence ID" value="AAR85392.1"/>
    <property type="status" value="ALT_SEQ"/>
    <property type="molecule type" value="Genomic_DNA"/>
</dbReference>
<dbReference type="EMBL" id="AY470009">
    <property type="protein sequence ID" value="AAR85393.1"/>
    <property type="status" value="ALT_SEQ"/>
    <property type="molecule type" value="Genomic_DNA"/>
</dbReference>
<dbReference type="EMBL" id="AY470010">
    <property type="protein sequence ID" value="AAR85394.1"/>
    <property type="status" value="ALT_SEQ"/>
    <property type="molecule type" value="Genomic_DNA"/>
</dbReference>
<dbReference type="EMBL" id="AY470011">
    <property type="protein sequence ID" value="AAR85395.1"/>
    <property type="status" value="ALT_SEQ"/>
    <property type="molecule type" value="Genomic_DNA"/>
</dbReference>
<dbReference type="EMBL" id="AY470012">
    <property type="protein sequence ID" value="AAR85396.1"/>
    <property type="status" value="ALT_SEQ"/>
    <property type="molecule type" value="Genomic_DNA"/>
</dbReference>
<dbReference type="EMBL" id="AY470013">
    <property type="protein sequence ID" value="AAR85397.1"/>
    <property type="status" value="ALT_SEQ"/>
    <property type="molecule type" value="Genomic_DNA"/>
</dbReference>
<dbReference type="EMBL" id="AY470014">
    <property type="protein sequence ID" value="AAR85398.1"/>
    <property type="status" value="ALT_SEQ"/>
    <property type="molecule type" value="Genomic_DNA"/>
</dbReference>
<dbReference type="RefSeq" id="NP_001031867.1">
    <molecule id="P0DI07-1"/>
    <property type="nucleotide sequence ID" value="NM_001036790.2"/>
</dbReference>
<dbReference type="RefSeq" id="NP_001117584.1">
    <molecule id="P0DI07-1"/>
    <property type="nucleotide sequence ID" value="NM_001124112.2"/>
</dbReference>
<dbReference type="RefSeq" id="NP_001319364.1">
    <molecule id="P0DI07-1"/>
    <property type="nucleotide sequence ID" value="NM_001334509.1"/>
</dbReference>
<dbReference type="RefSeq" id="NP_001321653.1">
    <molecule id="P0DI07-2"/>
    <property type="nucleotide sequence ID" value="NM_001334511.1"/>
</dbReference>
<dbReference type="RefSeq" id="NP_001321654.1">
    <molecule id="P0DI07-2"/>
    <property type="nucleotide sequence ID" value="NM_001334510.1"/>
</dbReference>
<dbReference type="RefSeq" id="NP_001330915.1">
    <molecule id="P0DI07-2"/>
    <property type="nucleotide sequence ID" value="NM_001343108.1"/>
</dbReference>
<dbReference type="RefSeq" id="NP_001330916.1">
    <molecule id="P0DI07-2"/>
    <property type="nucleotide sequence ID" value="NM_001343107.1"/>
</dbReference>
<dbReference type="RefSeq" id="NP_001330917.1">
    <molecule id="P0DI07-2"/>
    <property type="nucleotide sequence ID" value="NM_001343106.1"/>
</dbReference>
<dbReference type="RefSeq" id="NP_001330918.1">
    <molecule id="P0DI07-2"/>
    <property type="nucleotide sequence ID" value="NM_001343105.1"/>
</dbReference>
<dbReference type="RefSeq" id="NP_177337.1">
    <property type="nucleotide sequence ID" value="NM_105850.3"/>
</dbReference>
<dbReference type="RefSeq" id="NP_568226.1">
    <molecule id="P0DI07-1"/>
    <property type="nucleotide sequence ID" value="NM_121071.4"/>
</dbReference>
<dbReference type="SMR" id="P0DI07"/>
<dbReference type="BioGRID" id="16175">
    <property type="interactions" value="2"/>
</dbReference>
<dbReference type="BioGRID" id="28743">
    <property type="interactions" value="2"/>
</dbReference>
<dbReference type="FunCoup" id="P0DI07">
    <property type="interactions" value="450"/>
</dbReference>
<dbReference type="STRING" id="3702.P0DI07"/>
<dbReference type="iPTMnet" id="P0DI07"/>
<dbReference type="EnsemblPlants" id="AT1G71920.2">
    <molecule id="P0DI07-1"/>
    <property type="protein sequence ID" value="AT1G71920.2"/>
    <property type="gene ID" value="AT1G71920"/>
</dbReference>
<dbReference type="EnsemblPlants" id="AT1G71920.4">
    <property type="protein sequence ID" value="AT1G71920.4"/>
    <property type="gene ID" value="AT1G71920"/>
</dbReference>
<dbReference type="EnsemblPlants" id="AT1G71920.5">
    <property type="protein sequence ID" value="AT1G71920.5"/>
    <property type="gene ID" value="AT1G71920"/>
</dbReference>
<dbReference type="EnsemblPlants" id="AT1G71920.6">
    <molecule id="P0DI07-1"/>
    <property type="protein sequence ID" value="AT1G71920.6"/>
    <property type="gene ID" value="AT1G71920"/>
</dbReference>
<dbReference type="EnsemblPlants" id="AT5G10330.1">
    <molecule id="P0DI07-1"/>
    <property type="protein sequence ID" value="AT5G10330.1"/>
    <property type="gene ID" value="AT5G10330"/>
</dbReference>
<dbReference type="EnsemblPlants" id="AT5G10330.2">
    <molecule id="P0DI07-1"/>
    <property type="protein sequence ID" value="AT5G10330.2"/>
    <property type="gene ID" value="AT5G10330"/>
</dbReference>
<dbReference type="EnsemblPlants" id="AT5G10330.4">
    <property type="protein sequence ID" value="AT5G10330.4"/>
    <property type="gene ID" value="AT5G10330"/>
</dbReference>
<dbReference type="EnsemblPlants" id="AT5G10330.5">
    <property type="protein sequence ID" value="AT5G10330.5"/>
    <property type="gene ID" value="AT5G10330"/>
</dbReference>
<dbReference type="EnsemblPlants" id="AT5G10330.6">
    <property type="protein sequence ID" value="AT5G10330.6"/>
    <property type="gene ID" value="AT5G10330"/>
</dbReference>
<dbReference type="EnsemblPlants" id="AT5G10330.7">
    <property type="protein sequence ID" value="AT5G10330.7"/>
    <property type="gene ID" value="AT5G10330"/>
</dbReference>
<dbReference type="GeneID" id="843523"/>
<dbReference type="Gramene" id="AT1G71920.2">
    <molecule id="P0DI07-1"/>
    <property type="protein sequence ID" value="AT1G71920.2"/>
    <property type="gene ID" value="AT1G71920"/>
</dbReference>
<dbReference type="Gramene" id="AT1G71920.4">
    <property type="protein sequence ID" value="AT1G71920.4"/>
    <property type="gene ID" value="AT1G71920"/>
</dbReference>
<dbReference type="Gramene" id="AT1G71920.5">
    <property type="protein sequence ID" value="AT1G71920.5"/>
    <property type="gene ID" value="AT1G71920"/>
</dbReference>
<dbReference type="Gramene" id="AT1G71920.6">
    <molecule id="P0DI07-1"/>
    <property type="protein sequence ID" value="AT1G71920.6"/>
    <property type="gene ID" value="AT1G71920"/>
</dbReference>
<dbReference type="Gramene" id="AT5G10330.1">
    <molecule id="P0DI07-1"/>
    <property type="protein sequence ID" value="AT5G10330.1"/>
    <property type="gene ID" value="AT5G10330"/>
</dbReference>
<dbReference type="Gramene" id="AT5G10330.2">
    <molecule id="P0DI07-1"/>
    <property type="protein sequence ID" value="AT5G10330.2"/>
    <property type="gene ID" value="AT5G10330"/>
</dbReference>
<dbReference type="Gramene" id="AT5G10330.4">
    <property type="protein sequence ID" value="AT5G10330.4"/>
    <property type="gene ID" value="AT5G10330"/>
</dbReference>
<dbReference type="Gramene" id="AT5G10330.5">
    <property type="protein sequence ID" value="AT5G10330.5"/>
    <property type="gene ID" value="AT5G10330"/>
</dbReference>
<dbReference type="Gramene" id="AT5G10330.6">
    <property type="protein sequence ID" value="AT5G10330.6"/>
    <property type="gene ID" value="AT5G10330"/>
</dbReference>
<dbReference type="Gramene" id="AT5G10330.7">
    <property type="protein sequence ID" value="AT5G10330.7"/>
    <property type="gene ID" value="AT5G10330"/>
</dbReference>
<dbReference type="KEGG" id="ath:AT1G71920"/>
<dbReference type="KEGG" id="ath:AT5G10330"/>
<dbReference type="Araport" id="AT1G71920"/>
<dbReference type="TAIR" id="AT1G71920">
    <property type="gene designation" value="HISN6B"/>
</dbReference>
<dbReference type="InParanoid" id="P0DI07"/>
<dbReference type="OMA" id="NFVQFGR"/>
<dbReference type="OrthoDB" id="2015537at2759"/>
<dbReference type="PhylomeDB" id="P0DI07"/>
<dbReference type="UniPathway" id="UPA00031">
    <property type="reaction ID" value="UER00012"/>
</dbReference>
<dbReference type="PRO" id="PR:P0DI07"/>
<dbReference type="Proteomes" id="UP000006548">
    <property type="component" value="Chromosome 1"/>
</dbReference>
<dbReference type="ExpressionAtlas" id="P0DI07">
    <property type="expression patterns" value="baseline and differential"/>
</dbReference>
<dbReference type="GO" id="GO:0009570">
    <property type="term" value="C:chloroplast stroma"/>
    <property type="evidence" value="ECO:0007005"/>
    <property type="project" value="TAIR"/>
</dbReference>
<dbReference type="GO" id="GO:0004400">
    <property type="term" value="F:histidinol-phosphate transaminase activity"/>
    <property type="evidence" value="ECO:0000316"/>
    <property type="project" value="TAIR"/>
</dbReference>
<dbReference type="GO" id="GO:0030170">
    <property type="term" value="F:pyridoxal phosphate binding"/>
    <property type="evidence" value="ECO:0007669"/>
    <property type="project" value="InterPro"/>
</dbReference>
<dbReference type="GO" id="GO:0000105">
    <property type="term" value="P:L-histidine biosynthetic process"/>
    <property type="evidence" value="ECO:0000316"/>
    <property type="project" value="TAIR"/>
</dbReference>
<dbReference type="CDD" id="cd00609">
    <property type="entry name" value="AAT_like"/>
    <property type="match status" value="1"/>
</dbReference>
<dbReference type="FunFam" id="3.40.640.10:FF:000131">
    <property type="entry name" value="HISTIDINE BIOSYNTHESIS 6B"/>
    <property type="match status" value="1"/>
</dbReference>
<dbReference type="Gene3D" id="3.90.1150.10">
    <property type="entry name" value="Aspartate Aminotransferase, domain 1"/>
    <property type="match status" value="1"/>
</dbReference>
<dbReference type="Gene3D" id="3.40.640.10">
    <property type="entry name" value="Type I PLP-dependent aspartate aminotransferase-like (Major domain)"/>
    <property type="match status" value="1"/>
</dbReference>
<dbReference type="HAMAP" id="MF_01023">
    <property type="entry name" value="HisC_aminotrans_2"/>
    <property type="match status" value="1"/>
</dbReference>
<dbReference type="InterPro" id="IPR004839">
    <property type="entry name" value="Aminotransferase_I/II_large"/>
</dbReference>
<dbReference type="InterPro" id="IPR005861">
    <property type="entry name" value="HisP_aminotrans"/>
</dbReference>
<dbReference type="InterPro" id="IPR015424">
    <property type="entry name" value="PyrdxlP-dep_Trfase"/>
</dbReference>
<dbReference type="InterPro" id="IPR015421">
    <property type="entry name" value="PyrdxlP-dep_Trfase_major"/>
</dbReference>
<dbReference type="InterPro" id="IPR015422">
    <property type="entry name" value="PyrdxlP-dep_Trfase_small"/>
</dbReference>
<dbReference type="NCBIfam" id="TIGR01141">
    <property type="entry name" value="hisC"/>
    <property type="match status" value="1"/>
</dbReference>
<dbReference type="PANTHER" id="PTHR42885:SF2">
    <property type="entry name" value="HISTIDINOL-PHOSPHATE AMINOTRANSFERASE"/>
    <property type="match status" value="1"/>
</dbReference>
<dbReference type="PANTHER" id="PTHR42885">
    <property type="entry name" value="HISTIDINOL-PHOSPHATE AMINOTRANSFERASE-RELATED"/>
    <property type="match status" value="1"/>
</dbReference>
<dbReference type="Pfam" id="PF00155">
    <property type="entry name" value="Aminotran_1_2"/>
    <property type="match status" value="1"/>
</dbReference>
<dbReference type="SUPFAM" id="SSF53383">
    <property type="entry name" value="PLP-dependent transferases"/>
    <property type="match status" value="1"/>
</dbReference>
<accession>P0DI07</accession>
<accession>Q6S4C1</accession>
<accession>Q6S4D6</accession>
<accession>Q949X3</accession>
<accession>Q9LD56</accession>
<feature type="transit peptide" description="Chloroplast" evidence="4">
    <location>
        <begin position="1"/>
        <end position="40"/>
    </location>
</feature>
<feature type="chain" id="PRO_0000416436" description="Histidinol-phosphate aminotransferase 2, chloroplastic">
    <location>
        <begin position="41"/>
        <end position="417"/>
    </location>
</feature>
<feature type="modified residue" description="N-acetylalanine" evidence="4">
    <location>
        <position position="41"/>
    </location>
</feature>
<feature type="modified residue" description="N6-(pyridoxal phosphate)lysine" evidence="1">
    <location>
        <position position="277"/>
    </location>
</feature>
<feature type="splice variant" id="VSP_058847" description="In isoform 2.">
    <location>
        <begin position="1"/>
        <end position="113"/>
    </location>
</feature>
<organism>
    <name type="scientific">Arabidopsis thaliana</name>
    <name type="common">Mouse-ear cress</name>
    <dbReference type="NCBI Taxonomy" id="3702"/>
    <lineage>
        <taxon>Eukaryota</taxon>
        <taxon>Viridiplantae</taxon>
        <taxon>Streptophyta</taxon>
        <taxon>Embryophyta</taxon>
        <taxon>Tracheophyta</taxon>
        <taxon>Spermatophyta</taxon>
        <taxon>Magnoliopsida</taxon>
        <taxon>eudicotyledons</taxon>
        <taxon>Gunneridae</taxon>
        <taxon>Pentapetalae</taxon>
        <taxon>rosids</taxon>
        <taxon>malvids</taxon>
        <taxon>Brassicales</taxon>
        <taxon>Brassicaceae</taxon>
        <taxon>Camelineae</taxon>
        <taxon>Arabidopsis</taxon>
    </lineage>
</organism>
<protein>
    <recommendedName>
        <fullName>Histidinol-phosphate aminotransferase 2, chloroplastic</fullName>
        <ecNumber evidence="3">2.6.1.9</ecNumber>
    </recommendedName>
    <alternativeName>
        <fullName>Gene duplicate 1-A protein</fullName>
    </alternativeName>
    <alternativeName>
        <fullName>Imidazole acetol-phosphate transaminase</fullName>
    </alternativeName>
    <alternativeName>
        <fullName>Protein HISTIDINE BIOSYNTHESIS 6B</fullName>
    </alternativeName>
</protein>
<evidence type="ECO:0000250" key="1"/>
<evidence type="ECO:0000305" key="2"/>
<evidence type="ECO:0000305" key="3">
    <source>
    </source>
</evidence>
<evidence type="ECO:0007744" key="4">
    <source>
    </source>
</evidence>
<proteinExistence type="evidence at protein level"/>
<reference key="1">
    <citation type="journal article" date="2000" name="Nature">
        <title>Sequence and analysis of chromosome 1 of the plant Arabidopsis thaliana.</title>
        <authorList>
            <person name="Theologis A."/>
            <person name="Ecker J.R."/>
            <person name="Palm C.J."/>
            <person name="Federspiel N.A."/>
            <person name="Kaul S."/>
            <person name="White O."/>
            <person name="Alonso J."/>
            <person name="Altafi H."/>
            <person name="Araujo R."/>
            <person name="Bowman C.L."/>
            <person name="Brooks S.Y."/>
            <person name="Buehler E."/>
            <person name="Chan A."/>
            <person name="Chao Q."/>
            <person name="Chen H."/>
            <person name="Cheuk R.F."/>
            <person name="Chin C.W."/>
            <person name="Chung M.K."/>
            <person name="Conn L."/>
            <person name="Conway A.B."/>
            <person name="Conway A.R."/>
            <person name="Creasy T.H."/>
            <person name="Dewar K."/>
            <person name="Dunn P."/>
            <person name="Etgu P."/>
            <person name="Feldblyum T.V."/>
            <person name="Feng J.-D."/>
            <person name="Fong B."/>
            <person name="Fujii C.Y."/>
            <person name="Gill J.E."/>
            <person name="Goldsmith A.D."/>
            <person name="Haas B."/>
            <person name="Hansen N.F."/>
            <person name="Hughes B."/>
            <person name="Huizar L."/>
            <person name="Hunter J.L."/>
            <person name="Jenkins J."/>
            <person name="Johnson-Hopson C."/>
            <person name="Khan S."/>
            <person name="Khaykin E."/>
            <person name="Kim C.J."/>
            <person name="Koo H.L."/>
            <person name="Kremenetskaia I."/>
            <person name="Kurtz D.B."/>
            <person name="Kwan A."/>
            <person name="Lam B."/>
            <person name="Langin-Hooper S."/>
            <person name="Lee A."/>
            <person name="Lee J.M."/>
            <person name="Lenz C.A."/>
            <person name="Li J.H."/>
            <person name="Li Y.-P."/>
            <person name="Lin X."/>
            <person name="Liu S.X."/>
            <person name="Liu Z.A."/>
            <person name="Luros J.S."/>
            <person name="Maiti R."/>
            <person name="Marziali A."/>
            <person name="Militscher J."/>
            <person name="Miranda M."/>
            <person name="Nguyen M."/>
            <person name="Nierman W.C."/>
            <person name="Osborne B.I."/>
            <person name="Pai G."/>
            <person name="Peterson J."/>
            <person name="Pham P.K."/>
            <person name="Rizzo M."/>
            <person name="Rooney T."/>
            <person name="Rowley D."/>
            <person name="Sakano H."/>
            <person name="Salzberg S.L."/>
            <person name="Schwartz J.R."/>
            <person name="Shinn P."/>
            <person name="Southwick A.M."/>
            <person name="Sun H."/>
            <person name="Tallon L.J."/>
            <person name="Tambunga G."/>
            <person name="Toriumi M.J."/>
            <person name="Town C.D."/>
            <person name="Utterback T."/>
            <person name="Van Aken S."/>
            <person name="Vaysberg M."/>
            <person name="Vysotskaia V.S."/>
            <person name="Walker M."/>
            <person name="Wu D."/>
            <person name="Yu G."/>
            <person name="Fraser C.M."/>
            <person name="Venter J.C."/>
            <person name="Davis R.W."/>
        </authorList>
    </citation>
    <scope>NUCLEOTIDE SEQUENCE [LARGE SCALE GENOMIC DNA]</scope>
    <source>
        <strain>cv. Columbia</strain>
    </source>
</reference>
<reference key="2">
    <citation type="journal article" date="2017" name="Plant J.">
        <title>Araport11: a complete reannotation of the Arabidopsis thaliana reference genome.</title>
        <authorList>
            <person name="Cheng C.Y."/>
            <person name="Krishnakumar V."/>
            <person name="Chan A.P."/>
            <person name="Thibaud-Nissen F."/>
            <person name="Schobel S."/>
            <person name="Town C.D."/>
        </authorList>
    </citation>
    <scope>GENOME REANNOTATION</scope>
    <source>
        <strain>cv. Columbia</strain>
    </source>
</reference>
<reference key="3">
    <citation type="journal article" date="2003" name="Proc. Natl. Acad. Sci. U.S.A.">
        <title>The early stages of duplicate gene evolution.</title>
        <authorList>
            <person name="Moore R.C."/>
            <person name="Purugganan M.D."/>
        </authorList>
    </citation>
    <scope>NUCLEOTIDE SEQUENCE [GENOMIC DNA] OF 1-119</scope>
    <source>
        <strain>cv. Co-1</strain>
        <strain>cv. Es-0</strain>
        <strain>cv. Ita-0</strain>
        <strain>cv. Kas-1</strain>
        <strain>cv. Kon</strain>
        <strain>cv. Landsberg erecta</strain>
        <strain>cv. Li-3</strain>
        <strain>cv. Lu-1</strain>
        <strain>cv. Mt-0</strain>
        <strain>cv. PHW-1</strain>
        <strain>cv. PHW-33</strain>
        <strain>cv. Pla-0</strain>
        <strain>cv. Pog-0</strain>
        <strain>cv. Tsu-1</strain>
        <strain>cv. Wassilewskija</strain>
    </source>
</reference>
<reference key="4">
    <citation type="journal article" date="2006" name="Amino Acids">
        <title>Histidine biosynthesis in plants.</title>
        <authorList>
            <person name="Stepansky A."/>
            <person name="Leustek T."/>
        </authorList>
    </citation>
    <scope>GENE FAMILY</scope>
    <scope>NOMENCLATURE</scope>
</reference>
<reference key="5">
    <citation type="journal article" date="2007" name="Plant Physiol.">
        <title>Genetic dissection of histidine biosynthesis in Arabidopsis.</title>
        <authorList>
            <person name="Muralla R."/>
            <person name="Sweeney C."/>
            <person name="Stepansky A."/>
            <person name="Leustek T."/>
            <person name="Meinke D."/>
        </authorList>
    </citation>
    <scope>GENE FAMILY</scope>
    <scope>NOMENCLATURE</scope>
    <scope>CATALYTIC ACTIVITY</scope>
    <scope>PATHWAY</scope>
</reference>
<reference key="6">
    <citation type="journal article" date="2012" name="Mol. Cell. Proteomics">
        <title>Comparative large-scale characterisation of plant vs. mammal proteins reveals similar and idiosyncratic N-alpha acetylation features.</title>
        <authorList>
            <person name="Bienvenut W.V."/>
            <person name="Sumpton D."/>
            <person name="Martinez A."/>
            <person name="Lilla S."/>
            <person name="Espagne C."/>
            <person name="Meinnel T."/>
            <person name="Giglione C."/>
        </authorList>
    </citation>
    <scope>ACETYLATION [LARGE SCALE ANALYSIS] AT ALA-41</scope>
    <scope>CLEAVAGE OF TRANSIT PEPTIDE [LARGE SCALE ANALYSIS] AFTER CYS-40</scope>
    <scope>IDENTIFICATION BY MASS SPECTROMETRY [LARGE SCALE ANALYSIS]</scope>
</reference>
<keyword id="KW-0007">Acetylation</keyword>
<keyword id="KW-0025">Alternative splicing</keyword>
<keyword id="KW-0028">Amino-acid biosynthesis</keyword>
<keyword id="KW-0032">Aminotransferase</keyword>
<keyword id="KW-0150">Chloroplast</keyword>
<keyword id="KW-0368">Histidine biosynthesis</keyword>
<keyword id="KW-0934">Plastid</keyword>
<keyword id="KW-0663">Pyridoxal phosphate</keyword>
<keyword id="KW-1185">Reference proteome</keyword>
<keyword id="KW-0808">Transferase</keyword>
<keyword id="KW-0809">Transit peptide</keyword>